<dbReference type="EMBL" id="AE009947">
    <property type="protein sequence ID" value="AAT44702.1"/>
    <property type="molecule type" value="Genomic_DNA"/>
</dbReference>
<dbReference type="SMR" id="Q6L390"/>
<dbReference type="GO" id="GO:0009535">
    <property type="term" value="C:chloroplast thylakoid membrane"/>
    <property type="evidence" value="ECO:0007669"/>
    <property type="project" value="UniProtKB-SubCell"/>
</dbReference>
<dbReference type="GO" id="GO:0009522">
    <property type="term" value="C:photosystem I"/>
    <property type="evidence" value="ECO:0007669"/>
    <property type="project" value="UniProtKB-KW"/>
</dbReference>
<dbReference type="GO" id="GO:0015979">
    <property type="term" value="P:photosynthesis"/>
    <property type="evidence" value="ECO:0007669"/>
    <property type="project" value="UniProtKB-UniRule"/>
</dbReference>
<dbReference type="HAMAP" id="MF_00431">
    <property type="entry name" value="PSI_PsaI"/>
    <property type="match status" value="1"/>
</dbReference>
<dbReference type="InterPro" id="IPR001302">
    <property type="entry name" value="PSI_PsaI"/>
</dbReference>
<dbReference type="InterPro" id="IPR036357">
    <property type="entry name" value="PSI_PsaI_sf"/>
</dbReference>
<dbReference type="NCBIfam" id="TIGR03052">
    <property type="entry name" value="PS_I_psaI"/>
    <property type="match status" value="1"/>
</dbReference>
<dbReference type="PANTHER" id="PTHR35775">
    <property type="match status" value="1"/>
</dbReference>
<dbReference type="PANTHER" id="PTHR35775:SF2">
    <property type="entry name" value="PHOTOSYSTEM I REACTION CENTER SUBUNIT VIII"/>
    <property type="match status" value="1"/>
</dbReference>
<dbReference type="Pfam" id="PF00796">
    <property type="entry name" value="PSI_8"/>
    <property type="match status" value="1"/>
</dbReference>
<dbReference type="SUPFAM" id="SSF81540">
    <property type="entry name" value="Subunit VIII of photosystem I reaction centre, PsaI"/>
    <property type="match status" value="1"/>
</dbReference>
<geneLocation type="chloroplast"/>
<sequence length="36" mass="3994">MTDLNLPSIFVPLVGLVFPAIAMTSLFLYVQKNKIV</sequence>
<organism>
    <name type="scientific">Saccharum hybrid</name>
    <name type="common">Sugarcane</name>
    <dbReference type="NCBI Taxonomy" id="15819"/>
    <lineage>
        <taxon>Eukaryota</taxon>
        <taxon>Viridiplantae</taxon>
        <taxon>Streptophyta</taxon>
        <taxon>Embryophyta</taxon>
        <taxon>Tracheophyta</taxon>
        <taxon>Spermatophyta</taxon>
        <taxon>Magnoliopsida</taxon>
        <taxon>Liliopsida</taxon>
        <taxon>Poales</taxon>
        <taxon>Poaceae</taxon>
        <taxon>PACMAD clade</taxon>
        <taxon>Panicoideae</taxon>
        <taxon>Andropogonodae</taxon>
        <taxon>Andropogoneae</taxon>
        <taxon>Saccharinae</taxon>
        <taxon>Saccharum</taxon>
    </lineage>
</organism>
<keyword id="KW-0150">Chloroplast</keyword>
<keyword id="KW-0472">Membrane</keyword>
<keyword id="KW-0602">Photosynthesis</keyword>
<keyword id="KW-0603">Photosystem I</keyword>
<keyword id="KW-0934">Plastid</keyword>
<keyword id="KW-0793">Thylakoid</keyword>
<keyword id="KW-0812">Transmembrane</keyword>
<keyword id="KW-1133">Transmembrane helix</keyword>
<gene>
    <name evidence="1" type="primary">psaI</name>
    <name type="ordered locus">PS133</name>
</gene>
<protein>
    <recommendedName>
        <fullName evidence="1">Photosystem I reaction center subunit VIII</fullName>
        <shortName evidence="1">PSI-I</shortName>
    </recommendedName>
</protein>
<name>PSAI_SACHY</name>
<evidence type="ECO:0000255" key="1">
    <source>
        <dbReference type="HAMAP-Rule" id="MF_00431"/>
    </source>
</evidence>
<proteinExistence type="inferred from homology"/>
<comment type="function">
    <text evidence="1">May help in the organization of the PsaL subunit.</text>
</comment>
<comment type="subcellular location">
    <subcellularLocation>
        <location evidence="1">Plastid</location>
        <location evidence="1">Chloroplast thylakoid membrane</location>
        <topology evidence="1">Single-pass membrane protein</topology>
    </subcellularLocation>
</comment>
<comment type="similarity">
    <text evidence="1">Belongs to the PsaI family.</text>
</comment>
<reference key="1">
    <citation type="journal article" date="2004" name="Curr. Genet.">
        <title>Structural features and transcript-editing analysis of sugarcane (Saccharum officinarum L.) chloroplast genome.</title>
        <authorList>
            <person name="Calsa T. Jr."/>
            <person name="Carraro D.M."/>
            <person name="Benatti M.R."/>
            <person name="Barbosa A.C."/>
            <person name="Kitajima J.P."/>
            <person name="Carrer H."/>
        </authorList>
    </citation>
    <scope>NUCLEOTIDE SEQUENCE [LARGE SCALE GENOMIC DNA]</scope>
    <source>
        <strain>cv. SP-80-3280</strain>
    </source>
</reference>
<feature type="chain" id="PRO_0000194674" description="Photosystem I reaction center subunit VIII">
    <location>
        <begin position="1"/>
        <end position="36"/>
    </location>
</feature>
<feature type="transmembrane region" description="Helical" evidence="1">
    <location>
        <begin position="9"/>
        <end position="29"/>
    </location>
</feature>
<accession>Q6L390</accession>